<organism>
    <name type="scientific">Bacillus cereus (strain G9842)</name>
    <dbReference type="NCBI Taxonomy" id="405531"/>
    <lineage>
        <taxon>Bacteria</taxon>
        <taxon>Bacillati</taxon>
        <taxon>Bacillota</taxon>
        <taxon>Bacilli</taxon>
        <taxon>Bacillales</taxon>
        <taxon>Bacillaceae</taxon>
        <taxon>Bacillus</taxon>
        <taxon>Bacillus cereus group</taxon>
    </lineage>
</organism>
<accession>B7IVP2</accession>
<keyword id="KW-0028">Amino-acid biosynthesis</keyword>
<keyword id="KW-0479">Metal-binding</keyword>
<keyword id="KW-0486">Methionine biosynthesis</keyword>
<keyword id="KW-0489">Methyltransferase</keyword>
<keyword id="KW-0677">Repeat</keyword>
<keyword id="KW-0808">Transferase</keyword>
<keyword id="KW-0862">Zinc</keyword>
<evidence type="ECO:0000255" key="1">
    <source>
        <dbReference type="HAMAP-Rule" id="MF_00172"/>
    </source>
</evidence>
<feature type="chain" id="PRO_1000191195" description="5-methyltetrahydropteroyltriglutamate--homocysteine methyltransferase">
    <location>
        <begin position="1"/>
        <end position="762"/>
    </location>
</feature>
<feature type="active site" description="Proton donor" evidence="1">
    <location>
        <position position="698"/>
    </location>
</feature>
<feature type="binding site" evidence="1">
    <location>
        <begin position="17"/>
        <end position="20"/>
    </location>
    <ligand>
        <name>5-methyltetrahydropteroyltri-L-glutamate</name>
        <dbReference type="ChEBI" id="CHEBI:58207"/>
    </ligand>
</feature>
<feature type="binding site" evidence="1">
    <location>
        <position position="111"/>
    </location>
    <ligand>
        <name>5-methyltetrahydropteroyltri-L-glutamate</name>
        <dbReference type="ChEBI" id="CHEBI:58207"/>
    </ligand>
</feature>
<feature type="binding site" evidence="1">
    <location>
        <begin position="435"/>
        <end position="437"/>
    </location>
    <ligand>
        <name>L-homocysteine</name>
        <dbReference type="ChEBI" id="CHEBI:58199"/>
    </ligand>
</feature>
<feature type="binding site" evidence="1">
    <location>
        <begin position="435"/>
        <end position="437"/>
    </location>
    <ligand>
        <name>L-methionine</name>
        <dbReference type="ChEBI" id="CHEBI:57844"/>
    </ligand>
</feature>
<feature type="binding site" evidence="1">
    <location>
        <position position="488"/>
    </location>
    <ligand>
        <name>L-homocysteine</name>
        <dbReference type="ChEBI" id="CHEBI:58199"/>
    </ligand>
</feature>
<feature type="binding site" evidence="1">
    <location>
        <position position="488"/>
    </location>
    <ligand>
        <name>L-methionine</name>
        <dbReference type="ChEBI" id="CHEBI:57844"/>
    </ligand>
</feature>
<feature type="binding site" evidence="1">
    <location>
        <begin position="519"/>
        <end position="520"/>
    </location>
    <ligand>
        <name>5-methyltetrahydropteroyltri-L-glutamate</name>
        <dbReference type="ChEBI" id="CHEBI:58207"/>
    </ligand>
</feature>
<feature type="binding site" evidence="1">
    <location>
        <position position="565"/>
    </location>
    <ligand>
        <name>5-methyltetrahydropteroyltri-L-glutamate</name>
        <dbReference type="ChEBI" id="CHEBI:58207"/>
    </ligand>
</feature>
<feature type="binding site" evidence="1">
    <location>
        <position position="603"/>
    </location>
    <ligand>
        <name>L-homocysteine</name>
        <dbReference type="ChEBI" id="CHEBI:58199"/>
    </ligand>
</feature>
<feature type="binding site" evidence="1">
    <location>
        <position position="603"/>
    </location>
    <ligand>
        <name>L-methionine</name>
        <dbReference type="ChEBI" id="CHEBI:57844"/>
    </ligand>
</feature>
<feature type="binding site" evidence="1">
    <location>
        <position position="609"/>
    </location>
    <ligand>
        <name>5-methyltetrahydropteroyltri-L-glutamate</name>
        <dbReference type="ChEBI" id="CHEBI:58207"/>
    </ligand>
</feature>
<feature type="binding site" evidence="1">
    <location>
        <position position="645"/>
    </location>
    <ligand>
        <name>Zn(2+)</name>
        <dbReference type="ChEBI" id="CHEBI:29105"/>
        <note>catalytic</note>
    </ligand>
</feature>
<feature type="binding site" evidence="1">
    <location>
        <position position="647"/>
    </location>
    <ligand>
        <name>Zn(2+)</name>
        <dbReference type="ChEBI" id="CHEBI:29105"/>
        <note>catalytic</note>
    </ligand>
</feature>
<feature type="binding site" evidence="1">
    <location>
        <position position="669"/>
    </location>
    <ligand>
        <name>Zn(2+)</name>
        <dbReference type="ChEBI" id="CHEBI:29105"/>
        <note>catalytic</note>
    </ligand>
</feature>
<feature type="binding site" evidence="1">
    <location>
        <position position="730"/>
    </location>
    <ligand>
        <name>Zn(2+)</name>
        <dbReference type="ChEBI" id="CHEBI:29105"/>
        <note>catalytic</note>
    </ligand>
</feature>
<comment type="function">
    <text evidence="1">Catalyzes the transfer of a methyl group from 5-methyltetrahydrofolate to homocysteine resulting in methionine formation.</text>
</comment>
<comment type="catalytic activity">
    <reaction evidence="1">
        <text>5-methyltetrahydropteroyltri-L-glutamate + L-homocysteine = tetrahydropteroyltri-L-glutamate + L-methionine</text>
        <dbReference type="Rhea" id="RHEA:21196"/>
        <dbReference type="ChEBI" id="CHEBI:57844"/>
        <dbReference type="ChEBI" id="CHEBI:58140"/>
        <dbReference type="ChEBI" id="CHEBI:58199"/>
        <dbReference type="ChEBI" id="CHEBI:58207"/>
        <dbReference type="EC" id="2.1.1.14"/>
    </reaction>
</comment>
<comment type="cofactor">
    <cofactor evidence="1">
        <name>Zn(2+)</name>
        <dbReference type="ChEBI" id="CHEBI:29105"/>
    </cofactor>
    <text evidence="1">Binds 1 zinc ion per subunit.</text>
</comment>
<comment type="pathway">
    <text evidence="1">Amino-acid biosynthesis; L-methionine biosynthesis via de novo pathway; L-methionine from L-homocysteine (MetE route): step 1/1.</text>
</comment>
<comment type="similarity">
    <text evidence="1">Belongs to the vitamin-B12 independent methionine synthase family.</text>
</comment>
<gene>
    <name evidence="1" type="primary">metE</name>
    <name type="ordered locus">BCG9842_B1131</name>
</gene>
<proteinExistence type="inferred from homology"/>
<reference key="1">
    <citation type="submission" date="2008-10" db="EMBL/GenBank/DDBJ databases">
        <title>Genome sequence of Bacillus cereus G9842.</title>
        <authorList>
            <person name="Dodson R.J."/>
            <person name="Durkin A.S."/>
            <person name="Rosovitz M.J."/>
            <person name="Rasko D.A."/>
            <person name="Hoffmaster A."/>
            <person name="Ravel J."/>
            <person name="Sutton G."/>
        </authorList>
    </citation>
    <scope>NUCLEOTIDE SEQUENCE [LARGE SCALE GENOMIC DNA]</scope>
    <source>
        <strain>G9842</strain>
    </source>
</reference>
<protein>
    <recommendedName>
        <fullName evidence="1">5-methyltetrahydropteroyltriglutamate--homocysteine methyltransferase</fullName>
        <ecNumber evidence="1">2.1.1.14</ecNumber>
    </recommendedName>
    <alternativeName>
        <fullName evidence="1">Cobalamin-independent methionine synthase</fullName>
    </alternativeName>
    <alternativeName>
        <fullName evidence="1">Methionine synthase, vitamin-B12 independent isozyme</fullName>
    </alternativeName>
</protein>
<dbReference type="EC" id="2.1.1.14" evidence="1"/>
<dbReference type="EMBL" id="CP001186">
    <property type="protein sequence ID" value="ACK94765.1"/>
    <property type="molecule type" value="Genomic_DNA"/>
</dbReference>
<dbReference type="RefSeq" id="WP_001007602.1">
    <property type="nucleotide sequence ID" value="NC_011772.1"/>
</dbReference>
<dbReference type="SMR" id="B7IVP2"/>
<dbReference type="KEGG" id="bcg:BCG9842_B1131"/>
<dbReference type="HOGENOM" id="CLU_013175_0_0_9"/>
<dbReference type="UniPathway" id="UPA00051">
    <property type="reaction ID" value="UER00082"/>
</dbReference>
<dbReference type="Proteomes" id="UP000006744">
    <property type="component" value="Chromosome"/>
</dbReference>
<dbReference type="GO" id="GO:0003871">
    <property type="term" value="F:5-methyltetrahydropteroyltriglutamate-homocysteine S-methyltransferase activity"/>
    <property type="evidence" value="ECO:0007669"/>
    <property type="project" value="UniProtKB-UniRule"/>
</dbReference>
<dbReference type="GO" id="GO:0008270">
    <property type="term" value="F:zinc ion binding"/>
    <property type="evidence" value="ECO:0007669"/>
    <property type="project" value="InterPro"/>
</dbReference>
<dbReference type="GO" id="GO:0009086">
    <property type="term" value="P:methionine biosynthetic process"/>
    <property type="evidence" value="ECO:0007669"/>
    <property type="project" value="UniProtKB-UniRule"/>
</dbReference>
<dbReference type="GO" id="GO:0032259">
    <property type="term" value="P:methylation"/>
    <property type="evidence" value="ECO:0007669"/>
    <property type="project" value="UniProtKB-KW"/>
</dbReference>
<dbReference type="CDD" id="cd03311">
    <property type="entry name" value="CIMS_C_terminal_like"/>
    <property type="match status" value="1"/>
</dbReference>
<dbReference type="CDD" id="cd03312">
    <property type="entry name" value="CIMS_N_terminal_like"/>
    <property type="match status" value="1"/>
</dbReference>
<dbReference type="Gene3D" id="3.20.20.210">
    <property type="match status" value="2"/>
</dbReference>
<dbReference type="HAMAP" id="MF_00172">
    <property type="entry name" value="Meth_synth"/>
    <property type="match status" value="1"/>
</dbReference>
<dbReference type="InterPro" id="IPR013215">
    <property type="entry name" value="Cbl-indep_Met_Synth_N"/>
</dbReference>
<dbReference type="InterPro" id="IPR006276">
    <property type="entry name" value="Cobalamin-indep_Met_synthase"/>
</dbReference>
<dbReference type="InterPro" id="IPR002629">
    <property type="entry name" value="Met_Synth_C/arc"/>
</dbReference>
<dbReference type="InterPro" id="IPR038071">
    <property type="entry name" value="UROD/MetE-like_sf"/>
</dbReference>
<dbReference type="NCBIfam" id="TIGR01371">
    <property type="entry name" value="met_syn_B12ind"/>
    <property type="match status" value="1"/>
</dbReference>
<dbReference type="NCBIfam" id="NF003556">
    <property type="entry name" value="PRK05222.1"/>
    <property type="match status" value="1"/>
</dbReference>
<dbReference type="PANTHER" id="PTHR30519">
    <property type="entry name" value="5-METHYLTETRAHYDROPTEROYLTRIGLUTAMATE--HOMOCYSTEINE METHYLTRANSFERASE"/>
    <property type="match status" value="1"/>
</dbReference>
<dbReference type="Pfam" id="PF08267">
    <property type="entry name" value="Meth_synt_1"/>
    <property type="match status" value="1"/>
</dbReference>
<dbReference type="Pfam" id="PF01717">
    <property type="entry name" value="Meth_synt_2"/>
    <property type="match status" value="1"/>
</dbReference>
<dbReference type="PIRSF" id="PIRSF000382">
    <property type="entry name" value="MeTrfase_B12_ind"/>
    <property type="match status" value="1"/>
</dbReference>
<dbReference type="SUPFAM" id="SSF51726">
    <property type="entry name" value="UROD/MetE-like"/>
    <property type="match status" value="2"/>
</dbReference>
<sequence length="762" mass="87275">MAIQTSNLGYPRIGLQREWKKTLEAFWSNKIDEEQFLTTMKEIRLQHVKVQQEKGIELIPIGDFTYYDHVLDTAYMLGFIPSRFSEFTSYLDVYFAMARGSKDHVASEMTKWFNTNYHYIVPEYEEGLQISLKDNRPLRLYEEAKQELGVDGKPVILGPYTFLKLAKGYTQEQFATILKQLVAPYVQLLSELHAAGAQVIQVDEPIFASLTKEEVQQAKEIYEAIRKEVPNANLLLQTYFDSVEENYEEIITFPVSGIGLDFVHGKEGNLHAISKYGFPADKTLAVGCIDGRNIWRADLDEVLTLFTTLQKQVQTKDFIVQPSCSLLHTPIDKTEETHLSTELFDALAFANQKLEELVLIHSALTKGTESISNELETYRNVHHTIRSSAVRNREDVKAARTALKEEDFSRPLPFEKRYELQQVALELPLLPTTTIGSFPQTTEVRQTRKEWRNGVISNEQYEKFIEKETEKWIRYQEEIGLDVLVHGEFERTDMVEYFGERLAGFSFTKNGWVQSYGSRCVKPPVIYGDVAFINGMTIKETVYAQSLTEKVVKGMLTGPVTILNWSFVRNDIPRKEVSYQIALALRHEIELLESSGIRVIQVDEPALREGMPLKEKDWDAYITWAVQSFLLATSSVANETQIHTHMCYSNFEDIVDAIRALDADVISIETSRSHGEFIDTLKHTTYEKGIGLGVYDIHSPRVPSKDEMYKIVEQSLEVCDPKYFWINPDCGLKTRRTEEVIPALEHMVQAAKDARSLLKTNA</sequence>
<name>METE_BACC2</name>